<keyword id="KW-0028">Amino-acid biosynthesis</keyword>
<keyword id="KW-0067">ATP-binding</keyword>
<keyword id="KW-0963">Cytoplasm</keyword>
<keyword id="KW-0328">Glycosyltransferase</keyword>
<keyword id="KW-0368">Histidine biosynthesis</keyword>
<keyword id="KW-0460">Magnesium</keyword>
<keyword id="KW-0479">Metal-binding</keyword>
<keyword id="KW-0547">Nucleotide-binding</keyword>
<keyword id="KW-1185">Reference proteome</keyword>
<keyword id="KW-0808">Transferase</keyword>
<accession>Q1QIM4</accession>
<protein>
    <recommendedName>
        <fullName evidence="1">ATP phosphoribosyltransferase</fullName>
        <shortName evidence="1">ATP-PRT</shortName>
        <shortName evidence="1">ATP-PRTase</shortName>
        <ecNumber evidence="1">2.4.2.17</ecNumber>
    </recommendedName>
</protein>
<name>HIS1_NITHX</name>
<reference key="1">
    <citation type="submission" date="2006-03" db="EMBL/GenBank/DDBJ databases">
        <title>Complete sequence of chromosome of Nitrobacter hamburgensis X14.</title>
        <authorList>
            <consortium name="US DOE Joint Genome Institute"/>
            <person name="Copeland A."/>
            <person name="Lucas S."/>
            <person name="Lapidus A."/>
            <person name="Barry K."/>
            <person name="Detter J.C."/>
            <person name="Glavina del Rio T."/>
            <person name="Hammon N."/>
            <person name="Israni S."/>
            <person name="Dalin E."/>
            <person name="Tice H."/>
            <person name="Pitluck S."/>
            <person name="Chain P."/>
            <person name="Malfatti S."/>
            <person name="Shin M."/>
            <person name="Vergez L."/>
            <person name="Schmutz J."/>
            <person name="Larimer F."/>
            <person name="Land M."/>
            <person name="Hauser L."/>
            <person name="Kyrpides N."/>
            <person name="Ivanova N."/>
            <person name="Ward B."/>
            <person name="Arp D."/>
            <person name="Klotz M."/>
            <person name="Stein L."/>
            <person name="O'Mullan G."/>
            <person name="Starkenburg S."/>
            <person name="Sayavedra L."/>
            <person name="Poret-Peterson A.T."/>
            <person name="Gentry M.E."/>
            <person name="Bruce D."/>
            <person name="Richardson P."/>
        </authorList>
    </citation>
    <scope>NUCLEOTIDE SEQUENCE [LARGE SCALE GENOMIC DNA]</scope>
    <source>
        <strain>DSM 10229 / NCIMB 13809 / X14</strain>
    </source>
</reference>
<proteinExistence type="inferred from homology"/>
<dbReference type="EC" id="2.4.2.17" evidence="1"/>
<dbReference type="EMBL" id="CP000319">
    <property type="protein sequence ID" value="ABE63923.1"/>
    <property type="molecule type" value="Genomic_DNA"/>
</dbReference>
<dbReference type="RefSeq" id="WP_011511579.1">
    <property type="nucleotide sequence ID" value="NC_007964.1"/>
</dbReference>
<dbReference type="SMR" id="Q1QIM4"/>
<dbReference type="STRING" id="323097.Nham_3188"/>
<dbReference type="KEGG" id="nha:Nham_3188"/>
<dbReference type="eggNOG" id="COG0040">
    <property type="taxonomic scope" value="Bacteria"/>
</dbReference>
<dbReference type="HOGENOM" id="CLU_038115_0_1_5"/>
<dbReference type="OrthoDB" id="9806435at2"/>
<dbReference type="UniPathway" id="UPA00031">
    <property type="reaction ID" value="UER00006"/>
</dbReference>
<dbReference type="Proteomes" id="UP000001953">
    <property type="component" value="Chromosome"/>
</dbReference>
<dbReference type="GO" id="GO:0005737">
    <property type="term" value="C:cytoplasm"/>
    <property type="evidence" value="ECO:0007669"/>
    <property type="project" value="UniProtKB-SubCell"/>
</dbReference>
<dbReference type="GO" id="GO:0005524">
    <property type="term" value="F:ATP binding"/>
    <property type="evidence" value="ECO:0007669"/>
    <property type="project" value="UniProtKB-KW"/>
</dbReference>
<dbReference type="GO" id="GO:0003879">
    <property type="term" value="F:ATP phosphoribosyltransferase activity"/>
    <property type="evidence" value="ECO:0007669"/>
    <property type="project" value="UniProtKB-UniRule"/>
</dbReference>
<dbReference type="GO" id="GO:0000287">
    <property type="term" value="F:magnesium ion binding"/>
    <property type="evidence" value="ECO:0007669"/>
    <property type="project" value="UniProtKB-UniRule"/>
</dbReference>
<dbReference type="GO" id="GO:0000105">
    <property type="term" value="P:L-histidine biosynthetic process"/>
    <property type="evidence" value="ECO:0007669"/>
    <property type="project" value="UniProtKB-UniRule"/>
</dbReference>
<dbReference type="CDD" id="cd13593">
    <property type="entry name" value="PBP2_HisGL3"/>
    <property type="match status" value="1"/>
</dbReference>
<dbReference type="Gene3D" id="3.40.190.10">
    <property type="entry name" value="Periplasmic binding protein-like II"/>
    <property type="match status" value="2"/>
</dbReference>
<dbReference type="HAMAP" id="MF_00079">
    <property type="entry name" value="HisG_Long"/>
    <property type="match status" value="1"/>
</dbReference>
<dbReference type="InterPro" id="IPR020621">
    <property type="entry name" value="ATP-PRT_HisG_long"/>
</dbReference>
<dbReference type="InterPro" id="IPR013820">
    <property type="entry name" value="ATP_PRibTrfase_cat"/>
</dbReference>
<dbReference type="InterPro" id="IPR018198">
    <property type="entry name" value="ATP_PRibTrfase_CS"/>
</dbReference>
<dbReference type="InterPro" id="IPR001348">
    <property type="entry name" value="ATP_PRibTrfase_HisG"/>
</dbReference>
<dbReference type="NCBIfam" id="TIGR00070">
    <property type="entry name" value="hisG"/>
    <property type="match status" value="1"/>
</dbReference>
<dbReference type="PANTHER" id="PTHR21403:SF8">
    <property type="entry name" value="ATP PHOSPHORIBOSYLTRANSFERASE"/>
    <property type="match status" value="1"/>
</dbReference>
<dbReference type="PANTHER" id="PTHR21403">
    <property type="entry name" value="ATP PHOSPHORIBOSYLTRANSFERASE ATP-PRTASE"/>
    <property type="match status" value="1"/>
</dbReference>
<dbReference type="Pfam" id="PF01634">
    <property type="entry name" value="HisG"/>
    <property type="match status" value="1"/>
</dbReference>
<dbReference type="SUPFAM" id="SSF53850">
    <property type="entry name" value="Periplasmic binding protein-like II"/>
    <property type="match status" value="1"/>
</dbReference>
<dbReference type="PROSITE" id="PS01316">
    <property type="entry name" value="ATP_P_PHORIBOSYLTR"/>
    <property type="match status" value="1"/>
</dbReference>
<sequence length="325" mass="35153">MTAPLVLAVPSKGRLQENAEAFFARAGLTLAKPRGVRDYRGTIAELDNVEIAYLSASEIASQLARGMVHLGVTGEDLIRESIVDADKRVALIDGLGFGSANVVVAVPQSWIDVRTMADLDDVTIGFRAQHNRRMRVATKYINLTRVFFASHGVVDYRIVESAGATEGAPAVGTAEMIVDITTTGATLAANGLKVLDDGVILRSQANLVASRDADWSNGARETARIILDHIAARARANQYREVRTRFTGCDTTLLAEAHDRFGVVSPFGGPTSSGMVTLHCPPDRLYALGSFLRQHGAETVSIASLDYVFDRENPLFVRLEAFLRP</sequence>
<evidence type="ECO:0000255" key="1">
    <source>
        <dbReference type="HAMAP-Rule" id="MF_00079"/>
    </source>
</evidence>
<feature type="chain" id="PRO_1000004481" description="ATP phosphoribosyltransferase">
    <location>
        <begin position="1"/>
        <end position="325"/>
    </location>
</feature>
<comment type="function">
    <text evidence="1">Catalyzes the condensation of ATP and 5-phosphoribose 1-diphosphate to form N'-(5'-phosphoribosyl)-ATP (PR-ATP). Has a crucial role in the pathway because the rate of histidine biosynthesis seems to be controlled primarily by regulation of HisG enzymatic activity.</text>
</comment>
<comment type="catalytic activity">
    <reaction evidence="1">
        <text>1-(5-phospho-beta-D-ribosyl)-ATP + diphosphate = 5-phospho-alpha-D-ribose 1-diphosphate + ATP</text>
        <dbReference type="Rhea" id="RHEA:18473"/>
        <dbReference type="ChEBI" id="CHEBI:30616"/>
        <dbReference type="ChEBI" id="CHEBI:33019"/>
        <dbReference type="ChEBI" id="CHEBI:58017"/>
        <dbReference type="ChEBI" id="CHEBI:73183"/>
        <dbReference type="EC" id="2.4.2.17"/>
    </reaction>
</comment>
<comment type="cofactor">
    <cofactor evidence="1">
        <name>Mg(2+)</name>
        <dbReference type="ChEBI" id="CHEBI:18420"/>
    </cofactor>
</comment>
<comment type="activity regulation">
    <text evidence="1">Feedback inhibited by histidine.</text>
</comment>
<comment type="pathway">
    <text evidence="1">Amino-acid biosynthesis; L-histidine biosynthesis; L-histidine from 5-phospho-alpha-D-ribose 1-diphosphate: step 1/9.</text>
</comment>
<comment type="subcellular location">
    <subcellularLocation>
        <location evidence="1">Cytoplasm</location>
    </subcellularLocation>
</comment>
<comment type="similarity">
    <text evidence="1">Belongs to the ATP phosphoribosyltransferase family. Long subfamily.</text>
</comment>
<gene>
    <name evidence="1" type="primary">hisG</name>
    <name type="ordered locus">Nham_3188</name>
</gene>
<organism>
    <name type="scientific">Nitrobacter hamburgensis (strain DSM 10229 / NCIMB 13809 / X14)</name>
    <dbReference type="NCBI Taxonomy" id="323097"/>
    <lineage>
        <taxon>Bacteria</taxon>
        <taxon>Pseudomonadati</taxon>
        <taxon>Pseudomonadota</taxon>
        <taxon>Alphaproteobacteria</taxon>
        <taxon>Hyphomicrobiales</taxon>
        <taxon>Nitrobacteraceae</taxon>
        <taxon>Nitrobacter</taxon>
    </lineage>
</organism>